<sequence>MELVLKDAQSALTVSETTFGRDFNEALVHQVVVAYAAGARQGTRAQKTRAEVTGSGKKPWRQKGTGRARSGSIKSPIWRSGGVTFAARPQDHSQKVNKKMYRGALKSILSELVRQDRLIVVEKFSVEAPKTKLLAQKLKDMALEDVLIITGELDENLFLAARNLHKVDVRDATGIDPVSLIAFDKVVMTADAVKQVEEMLA</sequence>
<gene>
    <name evidence="1" type="primary">rplD</name>
    <name type="ordered locus">SCH_3373</name>
</gene>
<organism>
    <name type="scientific">Salmonella choleraesuis (strain SC-B67)</name>
    <dbReference type="NCBI Taxonomy" id="321314"/>
    <lineage>
        <taxon>Bacteria</taxon>
        <taxon>Pseudomonadati</taxon>
        <taxon>Pseudomonadota</taxon>
        <taxon>Gammaproteobacteria</taxon>
        <taxon>Enterobacterales</taxon>
        <taxon>Enterobacteriaceae</taxon>
        <taxon>Salmonella</taxon>
    </lineage>
</organism>
<dbReference type="EMBL" id="AE017220">
    <property type="protein sequence ID" value="AAX67279.1"/>
    <property type="molecule type" value="Genomic_DNA"/>
</dbReference>
<dbReference type="RefSeq" id="WP_000424395.1">
    <property type="nucleotide sequence ID" value="NC_006905.1"/>
</dbReference>
<dbReference type="SMR" id="Q57J33"/>
<dbReference type="GeneID" id="97442859"/>
<dbReference type="KEGG" id="sec:SCH_3373"/>
<dbReference type="HOGENOM" id="CLU_041575_5_2_6"/>
<dbReference type="Proteomes" id="UP000000538">
    <property type="component" value="Chromosome"/>
</dbReference>
<dbReference type="GO" id="GO:1990904">
    <property type="term" value="C:ribonucleoprotein complex"/>
    <property type="evidence" value="ECO:0007669"/>
    <property type="project" value="UniProtKB-KW"/>
</dbReference>
<dbReference type="GO" id="GO:0005840">
    <property type="term" value="C:ribosome"/>
    <property type="evidence" value="ECO:0007669"/>
    <property type="project" value="UniProtKB-KW"/>
</dbReference>
<dbReference type="GO" id="GO:0019843">
    <property type="term" value="F:rRNA binding"/>
    <property type="evidence" value="ECO:0007669"/>
    <property type="project" value="UniProtKB-UniRule"/>
</dbReference>
<dbReference type="GO" id="GO:0003735">
    <property type="term" value="F:structural constituent of ribosome"/>
    <property type="evidence" value="ECO:0007669"/>
    <property type="project" value="InterPro"/>
</dbReference>
<dbReference type="GO" id="GO:0006412">
    <property type="term" value="P:translation"/>
    <property type="evidence" value="ECO:0007669"/>
    <property type="project" value="UniProtKB-UniRule"/>
</dbReference>
<dbReference type="FunFam" id="3.40.1370.10:FF:000001">
    <property type="entry name" value="50S ribosomal protein L4"/>
    <property type="match status" value="1"/>
</dbReference>
<dbReference type="Gene3D" id="3.40.1370.10">
    <property type="match status" value="1"/>
</dbReference>
<dbReference type="HAMAP" id="MF_01328_B">
    <property type="entry name" value="Ribosomal_uL4_B"/>
    <property type="match status" value="1"/>
</dbReference>
<dbReference type="InterPro" id="IPR002136">
    <property type="entry name" value="Ribosomal_uL4"/>
</dbReference>
<dbReference type="InterPro" id="IPR013005">
    <property type="entry name" value="Ribosomal_uL4-like"/>
</dbReference>
<dbReference type="InterPro" id="IPR023574">
    <property type="entry name" value="Ribosomal_uL4_dom_sf"/>
</dbReference>
<dbReference type="NCBIfam" id="TIGR03953">
    <property type="entry name" value="rplD_bact"/>
    <property type="match status" value="1"/>
</dbReference>
<dbReference type="PANTHER" id="PTHR10746">
    <property type="entry name" value="50S RIBOSOMAL PROTEIN L4"/>
    <property type="match status" value="1"/>
</dbReference>
<dbReference type="PANTHER" id="PTHR10746:SF6">
    <property type="entry name" value="LARGE RIBOSOMAL SUBUNIT PROTEIN UL4M"/>
    <property type="match status" value="1"/>
</dbReference>
<dbReference type="Pfam" id="PF00573">
    <property type="entry name" value="Ribosomal_L4"/>
    <property type="match status" value="1"/>
</dbReference>
<dbReference type="SUPFAM" id="SSF52166">
    <property type="entry name" value="Ribosomal protein L4"/>
    <property type="match status" value="1"/>
</dbReference>
<evidence type="ECO:0000255" key="1">
    <source>
        <dbReference type="HAMAP-Rule" id="MF_01328"/>
    </source>
</evidence>
<evidence type="ECO:0000256" key="2">
    <source>
        <dbReference type="SAM" id="MobiDB-lite"/>
    </source>
</evidence>
<evidence type="ECO:0000305" key="3"/>
<reference key="1">
    <citation type="journal article" date="2005" name="Nucleic Acids Res.">
        <title>The genome sequence of Salmonella enterica serovar Choleraesuis, a highly invasive and resistant zoonotic pathogen.</title>
        <authorList>
            <person name="Chiu C.-H."/>
            <person name="Tang P."/>
            <person name="Chu C."/>
            <person name="Hu S."/>
            <person name="Bao Q."/>
            <person name="Yu J."/>
            <person name="Chou Y.-Y."/>
            <person name="Wang H.-S."/>
            <person name="Lee Y.-S."/>
        </authorList>
    </citation>
    <scope>NUCLEOTIDE SEQUENCE [LARGE SCALE GENOMIC DNA]</scope>
    <source>
        <strain>SC-B67</strain>
    </source>
</reference>
<keyword id="KW-0687">Ribonucleoprotein</keyword>
<keyword id="KW-0689">Ribosomal protein</keyword>
<keyword id="KW-0694">RNA-binding</keyword>
<keyword id="KW-0699">rRNA-binding</keyword>
<comment type="function">
    <text evidence="1">One of the primary rRNA binding proteins, this protein initially binds near the 5'-end of the 23S rRNA. It is important during the early stages of 50S assembly. It makes multiple contacts with different domains of the 23S rRNA in the assembled 50S subunit and ribosome.</text>
</comment>
<comment type="function">
    <text evidence="1">Forms part of the polypeptide exit tunnel.</text>
</comment>
<comment type="subunit">
    <text evidence="1">Part of the 50S ribosomal subunit.</text>
</comment>
<comment type="similarity">
    <text evidence="1">Belongs to the universal ribosomal protein uL4 family.</text>
</comment>
<name>RL4_SALCH</name>
<feature type="chain" id="PRO_0000242434" description="Large ribosomal subunit protein uL4">
    <location>
        <begin position="1"/>
        <end position="201"/>
    </location>
</feature>
<feature type="region of interest" description="Disordered" evidence="2">
    <location>
        <begin position="44"/>
        <end position="71"/>
    </location>
</feature>
<proteinExistence type="inferred from homology"/>
<protein>
    <recommendedName>
        <fullName evidence="1">Large ribosomal subunit protein uL4</fullName>
    </recommendedName>
    <alternativeName>
        <fullName evidence="3">50S ribosomal protein L4</fullName>
    </alternativeName>
</protein>
<accession>Q57J33</accession>